<name>PPK1_CAMJE</name>
<gene>
    <name evidence="1" type="primary">ppk</name>
    <name type="ordered locus">Cj1359</name>
</gene>
<evidence type="ECO:0000255" key="1">
    <source>
        <dbReference type="HAMAP-Rule" id="MF_00347"/>
    </source>
</evidence>
<accession>Q9PMU0</accession>
<accession>Q0P8Q0</accession>
<sequence>MQTSPDMFINRELSWLRFNSRVLDQCSKNLPLLEKLKFIAIYCTNLDEFYMIRVAGLKQLFSAGVNASSSDEMTPLQQLKAIRKYLHQEKELLERYFNEITSELEKENLFIKHYENLDENLKQKCDEYFFSNIFPVIVPIAVDATHPFPHLNNLSFSLAVKICDKAHPELVKFGMIRIPRVLPRFYEVSANIYVPIESIVHQHAEEIFPGYKLLASAAFRVTRNADMVIEEEEADDFMMILEQGLKLRRKGAFVRLQIQKDADEQIVEFLNTHMKIFHKDVYEYSILLNLPSLWQIAGNKTFTHLLSPLYTPKTLPPFDENLSIFDAVEKEDILIIQPFESFDPVYKFIKEASKDPEVISIRMTLYRVEKNSNIVQALIDAASDGKQVTVMVELKARFDEENNLHWAKALENAGAHVIYGITGFKVHAKVSQVIRKQGDKLKFYMHLSTGNYNASSAKIYTDVSYFTSKAEFARDTTSFFHILSGFSKNRRLQTLSMSPNQIKEKVLEMIRIETSKKNEGVIVAKMNSLVDSDIIQALYEASMEGVQIDLIIRGICCLKPDEEYSKNIRVRSIIGKYLEHARVFYFKHSEPNYFISSADWMPRNLERRLELMTPIYDERSKAKLAQFLRLQLSDNVLAYELKNNGEYEKIPSSEKIIDSQQTLEEYVSKIYKTLKKDTDQSRATHLASKLFKEN</sequence>
<reference key="1">
    <citation type="journal article" date="2000" name="Nature">
        <title>The genome sequence of the food-borne pathogen Campylobacter jejuni reveals hypervariable sequences.</title>
        <authorList>
            <person name="Parkhill J."/>
            <person name="Wren B.W."/>
            <person name="Mungall K.L."/>
            <person name="Ketley J.M."/>
            <person name="Churcher C.M."/>
            <person name="Basham D."/>
            <person name="Chillingworth T."/>
            <person name="Davies R.M."/>
            <person name="Feltwell T."/>
            <person name="Holroyd S."/>
            <person name="Jagels K."/>
            <person name="Karlyshev A.V."/>
            <person name="Moule S."/>
            <person name="Pallen M.J."/>
            <person name="Penn C.W."/>
            <person name="Quail M.A."/>
            <person name="Rajandream M.A."/>
            <person name="Rutherford K.M."/>
            <person name="van Vliet A.H.M."/>
            <person name="Whitehead S."/>
            <person name="Barrell B.G."/>
        </authorList>
    </citation>
    <scope>NUCLEOTIDE SEQUENCE [LARGE SCALE GENOMIC DNA]</scope>
    <source>
        <strain>ATCC 700819 / NCTC 11168</strain>
    </source>
</reference>
<comment type="function">
    <text evidence="1">Catalyzes the reversible transfer of the terminal phosphate of ATP to form a long-chain polyphosphate (polyP).</text>
</comment>
<comment type="catalytic activity">
    <reaction evidence="1">
        <text>[phosphate](n) + ATP = [phosphate](n+1) + ADP</text>
        <dbReference type="Rhea" id="RHEA:19573"/>
        <dbReference type="Rhea" id="RHEA-COMP:9859"/>
        <dbReference type="Rhea" id="RHEA-COMP:14280"/>
        <dbReference type="ChEBI" id="CHEBI:16838"/>
        <dbReference type="ChEBI" id="CHEBI:30616"/>
        <dbReference type="ChEBI" id="CHEBI:456216"/>
        <dbReference type="EC" id="2.7.4.1"/>
    </reaction>
</comment>
<comment type="cofactor">
    <cofactor evidence="1">
        <name>Mg(2+)</name>
        <dbReference type="ChEBI" id="CHEBI:18420"/>
    </cofactor>
</comment>
<comment type="PTM">
    <text evidence="1">An intermediate of this reaction is the autophosphorylated ppk in which a phosphate is covalently linked to a histidine residue through a N-P bond.</text>
</comment>
<comment type="similarity">
    <text evidence="1">Belongs to the polyphosphate kinase 1 (PPK1) family.</text>
</comment>
<protein>
    <recommendedName>
        <fullName evidence="1">Polyphosphate kinase</fullName>
        <ecNumber evidence="1">2.7.4.1</ecNumber>
    </recommendedName>
    <alternativeName>
        <fullName evidence="1">ATP-polyphosphate phosphotransferase</fullName>
    </alternativeName>
    <alternativeName>
        <fullName evidence="1">Polyphosphoric acid kinase</fullName>
    </alternativeName>
</protein>
<feature type="chain" id="PRO_0000128637" description="Polyphosphate kinase">
    <location>
        <begin position="1"/>
        <end position="694"/>
    </location>
</feature>
<feature type="active site" description="Phosphohistidine intermediate" evidence="1">
    <location>
        <position position="427"/>
    </location>
</feature>
<feature type="binding site" evidence="1">
    <location>
        <position position="45"/>
    </location>
    <ligand>
        <name>ATP</name>
        <dbReference type="ChEBI" id="CHEBI:30616"/>
    </ligand>
</feature>
<feature type="binding site" evidence="1">
    <location>
        <position position="367"/>
    </location>
    <ligand>
        <name>Mg(2+)</name>
        <dbReference type="ChEBI" id="CHEBI:18420"/>
    </ligand>
</feature>
<feature type="binding site" evidence="1">
    <location>
        <position position="397"/>
    </location>
    <ligand>
        <name>Mg(2+)</name>
        <dbReference type="ChEBI" id="CHEBI:18420"/>
    </ligand>
</feature>
<feature type="binding site" evidence="1">
    <location>
        <position position="460"/>
    </location>
    <ligand>
        <name>ATP</name>
        <dbReference type="ChEBI" id="CHEBI:30616"/>
    </ligand>
</feature>
<feature type="binding site" evidence="1">
    <location>
        <position position="553"/>
    </location>
    <ligand>
        <name>ATP</name>
        <dbReference type="ChEBI" id="CHEBI:30616"/>
    </ligand>
</feature>
<feature type="binding site" evidence="1">
    <location>
        <position position="580"/>
    </location>
    <ligand>
        <name>ATP</name>
        <dbReference type="ChEBI" id="CHEBI:30616"/>
    </ligand>
</feature>
<proteinExistence type="inferred from homology"/>
<dbReference type="EC" id="2.7.4.1" evidence="1"/>
<dbReference type="EMBL" id="AL111168">
    <property type="protein sequence ID" value="CAL35471.1"/>
    <property type="molecule type" value="Genomic_DNA"/>
</dbReference>
<dbReference type="PIR" id="D81280">
    <property type="entry name" value="D81280"/>
</dbReference>
<dbReference type="RefSeq" id="WP_002860421.1">
    <property type="nucleotide sequence ID" value="NC_002163.1"/>
</dbReference>
<dbReference type="RefSeq" id="YP_002344747.1">
    <property type="nucleotide sequence ID" value="NC_002163.1"/>
</dbReference>
<dbReference type="SMR" id="Q9PMU0"/>
<dbReference type="IntAct" id="Q9PMU0">
    <property type="interactions" value="3"/>
</dbReference>
<dbReference type="STRING" id="192222.Cj1359"/>
<dbReference type="PaxDb" id="192222-Cj1359"/>
<dbReference type="EnsemblBacteria" id="CAL35471">
    <property type="protein sequence ID" value="CAL35471"/>
    <property type="gene ID" value="Cj1359"/>
</dbReference>
<dbReference type="GeneID" id="905652"/>
<dbReference type="KEGG" id="cje:Cj1359"/>
<dbReference type="PATRIC" id="fig|192222.6.peg.1341"/>
<dbReference type="eggNOG" id="COG0855">
    <property type="taxonomic scope" value="Bacteria"/>
</dbReference>
<dbReference type="HOGENOM" id="CLU_009678_1_1_7"/>
<dbReference type="OrthoDB" id="9761456at2"/>
<dbReference type="Proteomes" id="UP000000799">
    <property type="component" value="Chromosome"/>
</dbReference>
<dbReference type="GO" id="GO:0009358">
    <property type="term" value="C:polyphosphate kinase complex"/>
    <property type="evidence" value="ECO:0007669"/>
    <property type="project" value="InterPro"/>
</dbReference>
<dbReference type="GO" id="GO:0005524">
    <property type="term" value="F:ATP binding"/>
    <property type="evidence" value="ECO:0007669"/>
    <property type="project" value="UniProtKB-KW"/>
</dbReference>
<dbReference type="GO" id="GO:0046872">
    <property type="term" value="F:metal ion binding"/>
    <property type="evidence" value="ECO:0007669"/>
    <property type="project" value="UniProtKB-KW"/>
</dbReference>
<dbReference type="GO" id="GO:0008976">
    <property type="term" value="F:polyphosphate kinase activity"/>
    <property type="evidence" value="ECO:0007669"/>
    <property type="project" value="UniProtKB-UniRule"/>
</dbReference>
<dbReference type="GO" id="GO:0006799">
    <property type="term" value="P:polyphosphate biosynthetic process"/>
    <property type="evidence" value="ECO:0007669"/>
    <property type="project" value="UniProtKB-UniRule"/>
</dbReference>
<dbReference type="CDD" id="cd09165">
    <property type="entry name" value="PLDc_PaPPK1_C1_like"/>
    <property type="match status" value="1"/>
</dbReference>
<dbReference type="CDD" id="cd09168">
    <property type="entry name" value="PLDc_PaPPK1_C2_like"/>
    <property type="match status" value="1"/>
</dbReference>
<dbReference type="Gene3D" id="3.30.870.10">
    <property type="entry name" value="Endonuclease Chain A"/>
    <property type="match status" value="2"/>
</dbReference>
<dbReference type="Gene3D" id="3.30.1840.10">
    <property type="entry name" value="Polyphosphate kinase middle domain"/>
    <property type="match status" value="1"/>
</dbReference>
<dbReference type="Gene3D" id="1.20.58.310">
    <property type="entry name" value="Polyphosphate kinase N-terminal domain"/>
    <property type="match status" value="1"/>
</dbReference>
<dbReference type="HAMAP" id="MF_00347">
    <property type="entry name" value="Polyphosphate_kinase"/>
    <property type="match status" value="1"/>
</dbReference>
<dbReference type="InterPro" id="IPR003414">
    <property type="entry name" value="PP_kinase"/>
</dbReference>
<dbReference type="InterPro" id="IPR041108">
    <property type="entry name" value="PP_kinase_C_1"/>
</dbReference>
<dbReference type="InterPro" id="IPR024953">
    <property type="entry name" value="PP_kinase_middle"/>
</dbReference>
<dbReference type="InterPro" id="IPR036830">
    <property type="entry name" value="PP_kinase_middle_dom_sf"/>
</dbReference>
<dbReference type="InterPro" id="IPR025200">
    <property type="entry name" value="PPK_C_dom2"/>
</dbReference>
<dbReference type="InterPro" id="IPR025198">
    <property type="entry name" value="PPK_N_dom"/>
</dbReference>
<dbReference type="InterPro" id="IPR036832">
    <property type="entry name" value="PPK_N_dom_sf"/>
</dbReference>
<dbReference type="NCBIfam" id="TIGR03705">
    <property type="entry name" value="poly_P_kin"/>
    <property type="match status" value="1"/>
</dbReference>
<dbReference type="NCBIfam" id="NF003921">
    <property type="entry name" value="PRK05443.2-2"/>
    <property type="match status" value="1"/>
</dbReference>
<dbReference type="NCBIfam" id="NF003924">
    <property type="entry name" value="PRK05443.3-2"/>
    <property type="match status" value="1"/>
</dbReference>
<dbReference type="PANTHER" id="PTHR30218">
    <property type="entry name" value="POLYPHOSPHATE KINASE"/>
    <property type="match status" value="1"/>
</dbReference>
<dbReference type="PANTHER" id="PTHR30218:SF0">
    <property type="entry name" value="POLYPHOSPHATE KINASE"/>
    <property type="match status" value="1"/>
</dbReference>
<dbReference type="Pfam" id="PF02503">
    <property type="entry name" value="PP_kinase"/>
    <property type="match status" value="1"/>
</dbReference>
<dbReference type="Pfam" id="PF13090">
    <property type="entry name" value="PP_kinase_C"/>
    <property type="match status" value="1"/>
</dbReference>
<dbReference type="Pfam" id="PF17941">
    <property type="entry name" value="PP_kinase_C_1"/>
    <property type="match status" value="1"/>
</dbReference>
<dbReference type="Pfam" id="PF13089">
    <property type="entry name" value="PP_kinase_N"/>
    <property type="match status" value="1"/>
</dbReference>
<dbReference type="PIRSF" id="PIRSF015589">
    <property type="entry name" value="PP_kinase"/>
    <property type="match status" value="1"/>
</dbReference>
<dbReference type="SUPFAM" id="SSF56024">
    <property type="entry name" value="Phospholipase D/nuclease"/>
    <property type="match status" value="2"/>
</dbReference>
<dbReference type="SUPFAM" id="SSF143724">
    <property type="entry name" value="PHP14-like"/>
    <property type="match status" value="1"/>
</dbReference>
<dbReference type="SUPFAM" id="SSF140356">
    <property type="entry name" value="PPK N-terminal domain-like"/>
    <property type="match status" value="1"/>
</dbReference>
<organism>
    <name type="scientific">Campylobacter jejuni subsp. jejuni serotype O:2 (strain ATCC 700819 / NCTC 11168)</name>
    <dbReference type="NCBI Taxonomy" id="192222"/>
    <lineage>
        <taxon>Bacteria</taxon>
        <taxon>Pseudomonadati</taxon>
        <taxon>Campylobacterota</taxon>
        <taxon>Epsilonproteobacteria</taxon>
        <taxon>Campylobacterales</taxon>
        <taxon>Campylobacteraceae</taxon>
        <taxon>Campylobacter</taxon>
    </lineage>
</organism>
<keyword id="KW-0067">ATP-binding</keyword>
<keyword id="KW-0418">Kinase</keyword>
<keyword id="KW-0460">Magnesium</keyword>
<keyword id="KW-0479">Metal-binding</keyword>
<keyword id="KW-0547">Nucleotide-binding</keyword>
<keyword id="KW-0597">Phosphoprotein</keyword>
<keyword id="KW-1185">Reference proteome</keyword>
<keyword id="KW-0808">Transferase</keyword>